<reference key="1">
    <citation type="journal article" date="2000" name="Nature">
        <title>Sequence and analysis of chromosome 1 of the plant Arabidopsis thaliana.</title>
        <authorList>
            <person name="Theologis A."/>
            <person name="Ecker J.R."/>
            <person name="Palm C.J."/>
            <person name="Federspiel N.A."/>
            <person name="Kaul S."/>
            <person name="White O."/>
            <person name="Alonso J."/>
            <person name="Altafi H."/>
            <person name="Araujo R."/>
            <person name="Bowman C.L."/>
            <person name="Brooks S.Y."/>
            <person name="Buehler E."/>
            <person name="Chan A."/>
            <person name="Chao Q."/>
            <person name="Chen H."/>
            <person name="Cheuk R.F."/>
            <person name="Chin C.W."/>
            <person name="Chung M.K."/>
            <person name="Conn L."/>
            <person name="Conway A.B."/>
            <person name="Conway A.R."/>
            <person name="Creasy T.H."/>
            <person name="Dewar K."/>
            <person name="Dunn P."/>
            <person name="Etgu P."/>
            <person name="Feldblyum T.V."/>
            <person name="Feng J.-D."/>
            <person name="Fong B."/>
            <person name="Fujii C.Y."/>
            <person name="Gill J.E."/>
            <person name="Goldsmith A.D."/>
            <person name="Haas B."/>
            <person name="Hansen N.F."/>
            <person name="Hughes B."/>
            <person name="Huizar L."/>
            <person name="Hunter J.L."/>
            <person name="Jenkins J."/>
            <person name="Johnson-Hopson C."/>
            <person name="Khan S."/>
            <person name="Khaykin E."/>
            <person name="Kim C.J."/>
            <person name="Koo H.L."/>
            <person name="Kremenetskaia I."/>
            <person name="Kurtz D.B."/>
            <person name="Kwan A."/>
            <person name="Lam B."/>
            <person name="Langin-Hooper S."/>
            <person name="Lee A."/>
            <person name="Lee J.M."/>
            <person name="Lenz C.A."/>
            <person name="Li J.H."/>
            <person name="Li Y.-P."/>
            <person name="Lin X."/>
            <person name="Liu S.X."/>
            <person name="Liu Z.A."/>
            <person name="Luros J.S."/>
            <person name="Maiti R."/>
            <person name="Marziali A."/>
            <person name="Militscher J."/>
            <person name="Miranda M."/>
            <person name="Nguyen M."/>
            <person name="Nierman W.C."/>
            <person name="Osborne B.I."/>
            <person name="Pai G."/>
            <person name="Peterson J."/>
            <person name="Pham P.K."/>
            <person name="Rizzo M."/>
            <person name="Rooney T."/>
            <person name="Rowley D."/>
            <person name="Sakano H."/>
            <person name="Salzberg S.L."/>
            <person name="Schwartz J.R."/>
            <person name="Shinn P."/>
            <person name="Southwick A.M."/>
            <person name="Sun H."/>
            <person name="Tallon L.J."/>
            <person name="Tambunga G."/>
            <person name="Toriumi M.J."/>
            <person name="Town C.D."/>
            <person name="Utterback T."/>
            <person name="Van Aken S."/>
            <person name="Vaysberg M."/>
            <person name="Vysotskaia V.S."/>
            <person name="Walker M."/>
            <person name="Wu D."/>
            <person name="Yu G."/>
            <person name="Fraser C.M."/>
            <person name="Venter J.C."/>
            <person name="Davis R.W."/>
        </authorList>
    </citation>
    <scope>NUCLEOTIDE SEQUENCE [LARGE SCALE GENOMIC DNA]</scope>
    <source>
        <strain>cv. Columbia</strain>
    </source>
</reference>
<reference key="2">
    <citation type="journal article" date="2017" name="Plant J.">
        <title>Araport11: a complete reannotation of the Arabidopsis thaliana reference genome.</title>
        <authorList>
            <person name="Cheng C.Y."/>
            <person name="Krishnakumar V."/>
            <person name="Chan A.P."/>
            <person name="Thibaud-Nissen F."/>
            <person name="Schobel S."/>
            <person name="Town C.D."/>
        </authorList>
    </citation>
    <scope>GENOME REANNOTATION</scope>
    <source>
        <strain>cv. Columbia</strain>
    </source>
</reference>
<reference key="3">
    <citation type="journal article" date="2003" name="Plant Physiol.">
        <title>Arabidopsis contains a large superfamily of acyl-activating enzymes. Phylogenetic and biochemical analysis reveals a new class of acyl-coenzyme a synthetases.</title>
        <authorList>
            <person name="Shockey J.M."/>
            <person name="Fulda M.S."/>
            <person name="Browse J."/>
        </authorList>
    </citation>
    <scope>GENE FAMILY</scope>
</reference>
<gene>
    <name type="primary">AEE21</name>
    <name type="ordered locus">At1g76290</name>
    <name type="ORF">F15M4.21</name>
    <name type="ORF">T23E18.22</name>
</gene>
<accession>Q9SFW5</accession>
<accession>Q9SGQ5</accession>
<keyword id="KW-0276">Fatty acid metabolism</keyword>
<keyword id="KW-0436">Ligase</keyword>
<keyword id="KW-0443">Lipid metabolism</keyword>
<keyword id="KW-1185">Reference proteome</keyword>
<organism>
    <name type="scientific">Arabidopsis thaliana</name>
    <name type="common">Mouse-ear cress</name>
    <dbReference type="NCBI Taxonomy" id="3702"/>
    <lineage>
        <taxon>Eukaryota</taxon>
        <taxon>Viridiplantae</taxon>
        <taxon>Streptophyta</taxon>
        <taxon>Embryophyta</taxon>
        <taxon>Tracheophyta</taxon>
        <taxon>Spermatophyta</taxon>
        <taxon>Magnoliopsida</taxon>
        <taxon>eudicotyledons</taxon>
        <taxon>Gunneridae</taxon>
        <taxon>Pentapetalae</taxon>
        <taxon>rosids</taxon>
        <taxon>malvids</taxon>
        <taxon>Brassicales</taxon>
        <taxon>Brassicaceae</taxon>
        <taxon>Camelineae</taxon>
        <taxon>Arabidopsis</taxon>
    </lineage>
</organism>
<proteinExistence type="inferred from homology"/>
<dbReference type="EC" id="6.2.1.-"/>
<dbReference type="EMBL" id="AC009978">
    <property type="protein sequence ID" value="AAF17636.1"/>
    <property type="status" value="ALT_SEQ"/>
    <property type="molecule type" value="Genomic_DNA"/>
</dbReference>
<dbReference type="EMBL" id="AC012394">
    <property type="protein sequence ID" value="AAF16671.1"/>
    <property type="molecule type" value="Genomic_DNA"/>
</dbReference>
<dbReference type="EMBL" id="CP002684">
    <property type="protein sequence ID" value="AEE35821.1"/>
    <property type="molecule type" value="Genomic_DNA"/>
</dbReference>
<dbReference type="PIR" id="D96790">
    <property type="entry name" value="D96790"/>
</dbReference>
<dbReference type="RefSeq" id="NP_177756.1">
    <property type="nucleotide sequence ID" value="NM_106279.2"/>
</dbReference>
<dbReference type="SMR" id="Q9SFW5"/>
<dbReference type="FunCoup" id="Q9SFW5">
    <property type="interactions" value="103"/>
</dbReference>
<dbReference type="STRING" id="3702.Q9SFW5"/>
<dbReference type="iPTMnet" id="Q9SFW5"/>
<dbReference type="PaxDb" id="3702-AT1G76290.1"/>
<dbReference type="ProteomicsDB" id="244744"/>
<dbReference type="EnsemblPlants" id="AT1G76290.1">
    <property type="protein sequence ID" value="AT1G76290.1"/>
    <property type="gene ID" value="AT1G76290"/>
</dbReference>
<dbReference type="GeneID" id="843962"/>
<dbReference type="Gramene" id="AT1G76290.1">
    <property type="protein sequence ID" value="AT1G76290.1"/>
    <property type="gene ID" value="AT1G76290"/>
</dbReference>
<dbReference type="KEGG" id="ath:AT1G76290"/>
<dbReference type="Araport" id="AT1G76290"/>
<dbReference type="TAIR" id="AT1G76290"/>
<dbReference type="eggNOG" id="KOG1176">
    <property type="taxonomic scope" value="Eukaryota"/>
</dbReference>
<dbReference type="HOGENOM" id="CLU_000022_59_5_1"/>
<dbReference type="InParanoid" id="Q9SFW5"/>
<dbReference type="OMA" id="VCLREVN"/>
<dbReference type="PhylomeDB" id="Q9SFW5"/>
<dbReference type="BioCyc" id="ARA:AT1G76290-MONOMER"/>
<dbReference type="PRO" id="PR:Q9SFW5"/>
<dbReference type="Proteomes" id="UP000006548">
    <property type="component" value="Chromosome 1"/>
</dbReference>
<dbReference type="ExpressionAtlas" id="Q9SFW5">
    <property type="expression patterns" value="baseline and differential"/>
</dbReference>
<dbReference type="GO" id="GO:0016874">
    <property type="term" value="F:ligase activity"/>
    <property type="evidence" value="ECO:0007669"/>
    <property type="project" value="UniProtKB-KW"/>
</dbReference>
<dbReference type="GO" id="GO:0006631">
    <property type="term" value="P:fatty acid metabolic process"/>
    <property type="evidence" value="ECO:0007669"/>
    <property type="project" value="UniProtKB-KW"/>
</dbReference>
<dbReference type="CDD" id="cd05915">
    <property type="entry name" value="ttLC_FACS_like"/>
    <property type="match status" value="1"/>
</dbReference>
<dbReference type="FunFam" id="3.30.300.30:FF:000008">
    <property type="entry name" value="2,3-dihydroxybenzoate-AMP ligase"/>
    <property type="match status" value="1"/>
</dbReference>
<dbReference type="Gene3D" id="3.30.300.30">
    <property type="match status" value="1"/>
</dbReference>
<dbReference type="Gene3D" id="3.40.50.12780">
    <property type="entry name" value="N-terminal domain of ligase-like"/>
    <property type="match status" value="1"/>
</dbReference>
<dbReference type="InterPro" id="IPR025110">
    <property type="entry name" value="AMP-bd_C"/>
</dbReference>
<dbReference type="InterPro" id="IPR045851">
    <property type="entry name" value="AMP-bd_C_sf"/>
</dbReference>
<dbReference type="InterPro" id="IPR020845">
    <property type="entry name" value="AMP-binding_CS"/>
</dbReference>
<dbReference type="InterPro" id="IPR000873">
    <property type="entry name" value="AMP-dep_synth/lig_dom"/>
</dbReference>
<dbReference type="InterPro" id="IPR042099">
    <property type="entry name" value="ANL_N_sf"/>
</dbReference>
<dbReference type="PANTHER" id="PTHR43859">
    <property type="entry name" value="ACYL-ACTIVATING ENZYME"/>
    <property type="match status" value="1"/>
</dbReference>
<dbReference type="PANTHER" id="PTHR43859:SF4">
    <property type="entry name" value="BUTANOATE--COA LIGASE AAE1-RELATED"/>
    <property type="match status" value="1"/>
</dbReference>
<dbReference type="Pfam" id="PF00501">
    <property type="entry name" value="AMP-binding"/>
    <property type="match status" value="1"/>
</dbReference>
<dbReference type="Pfam" id="PF13193">
    <property type="entry name" value="AMP-binding_C"/>
    <property type="match status" value="1"/>
</dbReference>
<dbReference type="SUPFAM" id="SSF56801">
    <property type="entry name" value="Acetyl-CoA synthetase-like"/>
    <property type="match status" value="1"/>
</dbReference>
<dbReference type="PROSITE" id="PS00455">
    <property type="entry name" value="AMP_BINDING"/>
    <property type="match status" value="1"/>
</dbReference>
<name>AEE21_ARATH</name>
<comment type="function">
    <text evidence="1">May act as an acid--thiol ligase that activates carboxylic acids by forming acyl-CoAs.</text>
</comment>
<comment type="similarity">
    <text evidence="2">Belongs to the ATP-dependent AMP-binding enzyme family.</text>
</comment>
<comment type="sequence caution" evidence="2">
    <conflict type="erroneous gene model prediction">
        <sequence resource="EMBL-CDS" id="AAF17636"/>
    </conflict>
</comment>
<protein>
    <recommendedName>
        <fullName>Probable acyl-activating enzyme 21</fullName>
        <ecNumber>6.2.1.-</ecNumber>
    </recommendedName>
</protein>
<evidence type="ECO:0000250" key="1"/>
<evidence type="ECO:0000305" key="2"/>
<sequence>MEGTMRCSANYVPLSPISFLERAAVVFGSRTSVVYGDIQYTWHQTRDRCVRLASALSDLGLSRHDVVAALAPNVPALCELYFGAPMAGAVLCVLNTTFDSQMLAMALEKTKPKVFFVDSEFLSVAEESLSLLSNIEEKPLIITITENPTEQSKYEQYEDFLSTGNPNFKPIRPVDECDPIALNFTSGTTSTPKCVVYSHRGAYLNATAVGVMNEMKPMPVYLCTVPMYHCSGWCYIWTVTAFGGVIVCLREVNDEVIFDSIVKHKVTNFGGSPPVLNMIANARDSVKKSFPWTVQVMSGGSSPPEVMLKLKKLGFKVMMAYGCSEVYGLGTACLWMPEWETLPEEESLRLKARDGLNHFAKEAVDVLDPTTMKSVPHDGKTIRVIALRGNTVMSGYFKDKEATEAAFRGGWYWSRDMGVIDPDGYIQFKDRSQDVITCGGEIVGSKEIEGILYSHPAVYDAGVVGRPDETLGESMCAFVKLKEGAEAREEEIIEFCKRKLGNKNMKMIPKTVVFSDVPKTPTGKIRKNVLRKMAKDMGYVQLRAVE</sequence>
<feature type="chain" id="PRO_0000415731" description="Probable acyl-activating enzyme 21">
    <location>
        <begin position="1"/>
        <end position="546"/>
    </location>
</feature>